<protein>
    <recommendedName>
        <fullName>Semenogelin-2</fullName>
    </recommendedName>
    <alternativeName>
        <fullName>Semenogelin II</fullName>
        <shortName>SGII</shortName>
    </alternativeName>
</protein>
<organism>
    <name type="scientific">Homo sapiens</name>
    <name type="common">Human</name>
    <dbReference type="NCBI Taxonomy" id="9606"/>
    <lineage>
        <taxon>Eukaryota</taxon>
        <taxon>Metazoa</taxon>
        <taxon>Chordata</taxon>
        <taxon>Craniata</taxon>
        <taxon>Vertebrata</taxon>
        <taxon>Euteleostomi</taxon>
        <taxon>Mammalia</taxon>
        <taxon>Eutheria</taxon>
        <taxon>Euarchontoglires</taxon>
        <taxon>Primates</taxon>
        <taxon>Haplorrhini</taxon>
        <taxon>Catarrhini</taxon>
        <taxon>Hominidae</taxon>
        <taxon>Homo</taxon>
    </lineage>
</organism>
<evidence type="ECO:0000256" key="1">
    <source>
        <dbReference type="SAM" id="MobiDB-lite"/>
    </source>
</evidence>
<evidence type="ECO:0000269" key="2">
    <source>
    </source>
</evidence>
<evidence type="ECO:0000269" key="3">
    <source>
    </source>
</evidence>
<evidence type="ECO:0000305" key="4"/>
<evidence type="ECO:0000305" key="5">
    <source>
    </source>
</evidence>
<keyword id="KW-0903">Direct protein sequencing</keyword>
<keyword id="KW-0325">Glycoprotein</keyword>
<keyword id="KW-1267">Proteomics identification</keyword>
<keyword id="KW-1185">Reference proteome</keyword>
<keyword id="KW-0677">Repeat</keyword>
<keyword id="KW-0964">Secreted</keyword>
<keyword id="KW-0732">Signal</keyword>
<feature type="signal peptide">
    <location>
        <begin position="1"/>
        <end position="23"/>
    </location>
</feature>
<feature type="chain" id="PRO_0000032359" description="Semenogelin-2">
    <location>
        <begin position="24"/>
        <end position="582"/>
    </location>
</feature>
<feature type="repeat" description="3-1">
    <location>
        <begin position="70"/>
        <end position="129"/>
    </location>
</feature>
<feature type="repeat" description="2-1">
    <location>
        <begin position="141"/>
        <end position="200"/>
    </location>
</feature>
<feature type="repeat" description="2-2">
    <location>
        <begin position="201"/>
        <end position="260"/>
    </location>
</feature>
<feature type="repeat" description="3-2">
    <location>
        <begin position="501"/>
        <end position="559"/>
    </location>
</feature>
<feature type="region of interest" description="Disordered" evidence="1">
    <location>
        <begin position="24"/>
        <end position="59"/>
    </location>
</feature>
<feature type="region of interest" description="Repeat-rich region">
    <location>
        <begin position="70"/>
        <end position="559"/>
    </location>
</feature>
<feature type="region of interest" description="Disordered" evidence="1">
    <location>
        <begin position="132"/>
        <end position="160"/>
    </location>
</feature>
<feature type="region of interest" description="Disordered" evidence="1">
    <location>
        <begin position="173"/>
        <end position="194"/>
    </location>
</feature>
<feature type="region of interest" description="Disordered" evidence="1">
    <location>
        <begin position="228"/>
        <end position="248"/>
    </location>
</feature>
<feature type="region of interest" description="4 X 60 AA tandem repeats, type I">
    <location>
        <begin position="261"/>
        <end position="500"/>
    </location>
</feature>
<feature type="region of interest" description="Disordered" evidence="1">
    <location>
        <begin position="269"/>
        <end position="582"/>
    </location>
</feature>
<feature type="compositionally biased region" description="Polar residues" evidence="1">
    <location>
        <begin position="31"/>
        <end position="40"/>
    </location>
</feature>
<feature type="compositionally biased region" description="Polar residues" evidence="1">
    <location>
        <begin position="137"/>
        <end position="160"/>
    </location>
</feature>
<feature type="compositionally biased region" description="Polar residues" evidence="1">
    <location>
        <begin position="174"/>
        <end position="194"/>
    </location>
</feature>
<feature type="compositionally biased region" description="Basic and acidic residues" evidence="1">
    <location>
        <begin position="292"/>
        <end position="310"/>
    </location>
</feature>
<feature type="compositionally biased region" description="Polar residues" evidence="1">
    <location>
        <begin position="325"/>
        <end position="334"/>
    </location>
</feature>
<feature type="compositionally biased region" description="Basic and acidic residues" evidence="1">
    <location>
        <begin position="335"/>
        <end position="345"/>
    </location>
</feature>
<feature type="compositionally biased region" description="Polar residues" evidence="1">
    <location>
        <begin position="372"/>
        <end position="397"/>
    </location>
</feature>
<feature type="compositionally biased region" description="Basic and acidic residues" evidence="1">
    <location>
        <begin position="413"/>
        <end position="426"/>
    </location>
</feature>
<feature type="compositionally biased region" description="Polar residues" evidence="1">
    <location>
        <begin position="445"/>
        <end position="455"/>
    </location>
</feature>
<feature type="compositionally biased region" description="Basic and acidic residues" evidence="1">
    <location>
        <begin position="456"/>
        <end position="465"/>
    </location>
</feature>
<feature type="compositionally biased region" description="Polar residues" evidence="1">
    <location>
        <begin position="482"/>
        <end position="496"/>
    </location>
</feature>
<feature type="compositionally biased region" description="Polar residues" evidence="1">
    <location>
        <begin position="506"/>
        <end position="532"/>
    </location>
</feature>
<feature type="compositionally biased region" description="Basic and acidic residues" evidence="1">
    <location>
        <begin position="533"/>
        <end position="552"/>
    </location>
</feature>
<feature type="compositionally biased region" description="Basic and acidic residues" evidence="1">
    <location>
        <begin position="559"/>
        <end position="582"/>
    </location>
</feature>
<feature type="glycosylation site" description="N-linked (GlcNAc...) asparagine" evidence="5">
    <location>
        <position position="272"/>
    </location>
</feature>
<feature type="sequence variant" id="VAR_034489" description="In dbSNP:rs2233896.">
    <original>Q</original>
    <variation>K</variation>
    <location>
        <position position="43"/>
    </location>
</feature>
<feature type="sequence variant" id="VAR_034490" description="In dbSNP:rs2233897.">
    <original>T</original>
    <variation>A</variation>
    <location>
        <position position="57"/>
    </location>
</feature>
<feature type="sequence variant" id="VAR_024630" description="In dbSNP:rs2233901." evidence="2">
    <original>S</original>
    <variation>N</variation>
    <location>
        <position position="274"/>
    </location>
</feature>
<feature type="sequence variant" id="VAR_034491" description="In dbSNP:rs2233903.">
    <original>H</original>
    <variation>Y</variation>
    <location>
        <position position="279"/>
    </location>
</feature>
<feature type="sequence variant" id="VAR_024631" description="In dbSNP:rs2071650." evidence="2">
    <original>G</original>
    <variation>R</variation>
    <location>
        <position position="368"/>
    </location>
</feature>
<comment type="function">
    <text>Participates in the formation of a gel matrix (sperm coagulum) entrapping the accessory gland secretions and ejaculated spermatozoa.</text>
</comment>
<comment type="subunit">
    <text evidence="3">Interacts with SERPINA5.</text>
</comment>
<comment type="subcellular location">
    <subcellularLocation>
        <location>Secreted</location>
    </subcellularLocation>
</comment>
<comment type="tissue specificity">
    <text>Seminal vesicles, and to a much lesser extent, epididymis.</text>
</comment>
<comment type="PTM">
    <text evidence="3">Semenogelin-2 is thought to form both the 71 kDa polypeptide and, in its glycosylated form, the 76 kDa polypeptide.</text>
</comment>
<comment type="similarity">
    <text evidence="4">Belongs to the semenogelin family.</text>
</comment>
<comment type="online information" name="Protein Spotlight">
    <link uri="https://www.proteinspotlight.org/back_issues/062"/>
    <text>Shackled sperm - Issue 62 of September 2005</text>
</comment>
<sequence length="582" mass="65444">MKSIILFVLSLLLILEKQAAVMGQKGGSKGQLPSGSSQFPHGQKGQHYFGQKDQQHTKSKGSFSIQHTYHVDINDHDWTRKSQQYDLNALHKATKSKQHLGGSQQLLNYKQEGRDHDKSKGHFHMIVIHHKGGQAHHGTQNPSQDQGNSPSGKGLSSQCSNTEKRLWVHGLSKEQASASGAQKGRTQGGSQSSYVLQTEELVVNKQQRETKNSHQNKGHYQNVVDVREEHSSKLQTSLHPAHQDRLQHGPKDIFTTQDELLVYNKNQHQTKNLSQDQEHGRKAHKISYPSSRTEERQLHHGEKSVQKDVSKGSISIQTEEKIHGKSQNQVTIHSQDQEHGHKENKISYQSSSTEERHLNCGEKGIQKGVSKGSISIQTEEQIHGKSQNQVRIPSQAQEYGHKENKISYQSSSTEERRLNSGEKDVQKGVSKGSISIQTEEKIHGKSQNQVTIPSQDQEHGHKENKMSYQSSSTEERRLNYGGKSTQKDVSQSSISFQIEKLVEGKSQIQTPNPNQDQWSGQNAKGKSGQSADSKQDLLSHEQKGRYKQESSESHNIVITEHEVAQDDHLTQQYNEDRNPIST</sequence>
<accession>Q02383</accession>
<accession>Q53ZU2</accession>
<accession>Q6X2M5</accession>
<accession>Q6X2M6</accession>
<reference key="1">
    <citation type="journal article" date="1992" name="Proc. Natl. Acad. Sci. U.S.A.">
        <title>Molecular cloning of epididymal and seminal vesicular transcripts encoding a semenogelin-related protein.</title>
        <authorList>
            <person name="Lundwall A."/>
            <person name="Lilja H."/>
        </authorList>
    </citation>
    <scope>NUCLEOTIDE SEQUENCE [MRNA]</scope>
    <source>
        <tissue>Seminal vesicle</tissue>
    </source>
</reference>
<reference key="2">
    <citation type="journal article" date="1992" name="J. Biol. Chem.">
        <title>Gene structure of semenogelin I and II. The predominant proteins in human semen are encoded by two homologous genes on chromosome 20.</title>
        <authorList>
            <person name="Ulvsbaeck M."/>
            <person name="Lazure C."/>
            <person name="Lilja H."/>
            <person name="Spurr N.K."/>
            <person name="Rao V.V."/>
            <person name="Loeffler C."/>
            <person name="Hansmann I."/>
            <person name="Lundwall A."/>
        </authorList>
    </citation>
    <scope>NUCLEOTIDE SEQUENCE [GENOMIC DNA]</scope>
</reference>
<reference key="3">
    <citation type="journal article" date="2003" name="J. Mol. Evol.">
        <title>Evolution of the hominoid semenogelin genes, the major proteins of ejaculated semen.</title>
        <authorList>
            <person name="Jensen-Seaman M.I."/>
            <person name="Li W.-H."/>
        </authorList>
    </citation>
    <scope>NUCLEOTIDE SEQUENCE [GENOMIC DNA]</scope>
    <scope>VARIANTS ASN-274 AND ARG-368</scope>
</reference>
<reference key="4">
    <citation type="journal article" date="2001" name="Nature">
        <title>The DNA sequence and comparative analysis of human chromosome 20.</title>
        <authorList>
            <person name="Deloukas P."/>
            <person name="Matthews L.H."/>
            <person name="Ashurst J.L."/>
            <person name="Burton J."/>
            <person name="Gilbert J.G.R."/>
            <person name="Jones M."/>
            <person name="Stavrides G."/>
            <person name="Almeida J.P."/>
            <person name="Babbage A.K."/>
            <person name="Bagguley C.L."/>
            <person name="Bailey J."/>
            <person name="Barlow K.F."/>
            <person name="Bates K.N."/>
            <person name="Beard L.M."/>
            <person name="Beare D.M."/>
            <person name="Beasley O.P."/>
            <person name="Bird C.P."/>
            <person name="Blakey S.E."/>
            <person name="Bridgeman A.M."/>
            <person name="Brown A.J."/>
            <person name="Buck D."/>
            <person name="Burrill W.D."/>
            <person name="Butler A.P."/>
            <person name="Carder C."/>
            <person name="Carter N.P."/>
            <person name="Chapman J.C."/>
            <person name="Clamp M."/>
            <person name="Clark G."/>
            <person name="Clark L.N."/>
            <person name="Clark S.Y."/>
            <person name="Clee C.M."/>
            <person name="Clegg S."/>
            <person name="Cobley V.E."/>
            <person name="Collier R.E."/>
            <person name="Connor R.E."/>
            <person name="Corby N.R."/>
            <person name="Coulson A."/>
            <person name="Coville G.J."/>
            <person name="Deadman R."/>
            <person name="Dhami P.D."/>
            <person name="Dunn M."/>
            <person name="Ellington A.G."/>
            <person name="Frankland J.A."/>
            <person name="Fraser A."/>
            <person name="French L."/>
            <person name="Garner P."/>
            <person name="Grafham D.V."/>
            <person name="Griffiths C."/>
            <person name="Griffiths M.N.D."/>
            <person name="Gwilliam R."/>
            <person name="Hall R.E."/>
            <person name="Hammond S."/>
            <person name="Harley J.L."/>
            <person name="Heath P.D."/>
            <person name="Ho S."/>
            <person name="Holden J.L."/>
            <person name="Howden P.J."/>
            <person name="Huckle E."/>
            <person name="Hunt A.R."/>
            <person name="Hunt S.E."/>
            <person name="Jekosch K."/>
            <person name="Johnson C.M."/>
            <person name="Johnson D."/>
            <person name="Kay M.P."/>
            <person name="Kimberley A.M."/>
            <person name="King A."/>
            <person name="Knights A."/>
            <person name="Laird G.K."/>
            <person name="Lawlor S."/>
            <person name="Lehvaeslaiho M.H."/>
            <person name="Leversha M.A."/>
            <person name="Lloyd C."/>
            <person name="Lloyd D.M."/>
            <person name="Lovell J.D."/>
            <person name="Marsh V.L."/>
            <person name="Martin S.L."/>
            <person name="McConnachie L.J."/>
            <person name="McLay K."/>
            <person name="McMurray A.A."/>
            <person name="Milne S.A."/>
            <person name="Mistry D."/>
            <person name="Moore M.J.F."/>
            <person name="Mullikin J.C."/>
            <person name="Nickerson T."/>
            <person name="Oliver K."/>
            <person name="Parker A."/>
            <person name="Patel R."/>
            <person name="Pearce T.A.V."/>
            <person name="Peck A.I."/>
            <person name="Phillimore B.J.C.T."/>
            <person name="Prathalingam S.R."/>
            <person name="Plumb R.W."/>
            <person name="Ramsay H."/>
            <person name="Rice C.M."/>
            <person name="Ross M.T."/>
            <person name="Scott C.E."/>
            <person name="Sehra H.K."/>
            <person name="Shownkeen R."/>
            <person name="Sims S."/>
            <person name="Skuce C.D."/>
            <person name="Smith M.L."/>
            <person name="Soderlund C."/>
            <person name="Steward C.A."/>
            <person name="Sulston J.E."/>
            <person name="Swann R.M."/>
            <person name="Sycamore N."/>
            <person name="Taylor R."/>
            <person name="Tee L."/>
            <person name="Thomas D.W."/>
            <person name="Thorpe A."/>
            <person name="Tracey A."/>
            <person name="Tromans A.C."/>
            <person name="Vaudin M."/>
            <person name="Wall M."/>
            <person name="Wallis J.M."/>
            <person name="Whitehead S.L."/>
            <person name="Whittaker P."/>
            <person name="Willey D.L."/>
            <person name="Williams L."/>
            <person name="Williams S.A."/>
            <person name="Wilming L."/>
            <person name="Wray P.W."/>
            <person name="Hubbard T."/>
            <person name="Durbin R.M."/>
            <person name="Bentley D.R."/>
            <person name="Beck S."/>
            <person name="Rogers J."/>
        </authorList>
    </citation>
    <scope>NUCLEOTIDE SEQUENCE [LARGE SCALE GENOMIC DNA]</scope>
</reference>
<reference key="5">
    <citation type="submission" date="2005-09" db="EMBL/GenBank/DDBJ databases">
        <authorList>
            <person name="Mural R.J."/>
            <person name="Istrail S."/>
            <person name="Sutton G.G."/>
            <person name="Florea L."/>
            <person name="Halpern A.L."/>
            <person name="Mobarry C.M."/>
            <person name="Lippert R."/>
            <person name="Walenz B."/>
            <person name="Shatkay H."/>
            <person name="Dew I."/>
            <person name="Miller J.R."/>
            <person name="Flanigan M.J."/>
            <person name="Edwards N.J."/>
            <person name="Bolanos R."/>
            <person name="Fasulo D."/>
            <person name="Halldorsson B.V."/>
            <person name="Hannenhalli S."/>
            <person name="Turner R."/>
            <person name="Yooseph S."/>
            <person name="Lu F."/>
            <person name="Nusskern D.R."/>
            <person name="Shue B.C."/>
            <person name="Zheng X.H."/>
            <person name="Zhong F."/>
            <person name="Delcher A.L."/>
            <person name="Huson D.H."/>
            <person name="Kravitz S.A."/>
            <person name="Mouchard L."/>
            <person name="Reinert K."/>
            <person name="Remington K.A."/>
            <person name="Clark A.G."/>
            <person name="Waterman M.S."/>
            <person name="Eichler E.E."/>
            <person name="Adams M.D."/>
            <person name="Hunkapiller M.W."/>
            <person name="Myers E.W."/>
            <person name="Venter J.C."/>
        </authorList>
    </citation>
    <scope>NUCLEOTIDE SEQUENCE [LARGE SCALE GENOMIC DNA]</scope>
</reference>
<reference key="6">
    <citation type="journal article" date="1989" name="Biol. Chem. Hoppe-Seyler">
        <title>Isolation and structure determination of two peptides occurring in human seminal plasma.</title>
        <authorList>
            <person name="Schneider K."/>
            <person name="Kausler W."/>
            <person name="Tripier D."/>
            <person name="Jouvenal K."/>
            <person name="Spiteller G."/>
        </authorList>
    </citation>
    <scope>PARTIAL PROTEIN SEQUENCE</scope>
</reference>
<reference key="7">
    <citation type="journal article" date="1996" name="Eur. J. Biochem.">
        <title>Isolation and characterization of the major gel proteins in human semen, semenogelin I and semenogelin II.</title>
        <authorList>
            <person name="Malm J."/>
            <person name="Hellman J."/>
            <person name="Magnusson H."/>
            <person name="Laurell C.B."/>
            <person name="Lilja H."/>
        </authorList>
    </citation>
    <scope>CHARACTERIZATION</scope>
</reference>
<reference key="8">
    <citation type="journal article" date="1996" name="Eur. J. Biochem.">
        <title>Characterization of semenogelin II and its molecular interaction with prostate-specific antigen and protein C inhibitor.</title>
        <authorList>
            <person name="Kise H."/>
            <person name="Nishioka J."/>
            <person name="Kawamura J."/>
            <person name="Suzuki K."/>
        </authorList>
    </citation>
    <scope>GLYCOSYLATION</scope>
    <scope>INTERACTION WITH SERPINA5</scope>
</reference>
<name>SEMG2_HUMAN</name>
<proteinExistence type="evidence at protein level"/>
<dbReference type="EMBL" id="M81652">
    <property type="protein sequence ID" value="AAA60562.1"/>
    <property type="molecule type" value="mRNA"/>
</dbReference>
<dbReference type="EMBL" id="M81651">
    <property type="protein sequence ID" value="AAA60313.1"/>
    <property type="molecule type" value="Genomic_DNA"/>
</dbReference>
<dbReference type="EMBL" id="Z47556">
    <property type="protein sequence ID" value="CAA87637.1"/>
    <property type="molecule type" value="Genomic_DNA"/>
</dbReference>
<dbReference type="EMBL" id="AY259284">
    <property type="protein sequence ID" value="AAP86625.1"/>
    <property type="molecule type" value="Genomic_DNA"/>
</dbReference>
<dbReference type="EMBL" id="AY259285">
    <property type="protein sequence ID" value="AAP86626.1"/>
    <property type="molecule type" value="Genomic_DNA"/>
</dbReference>
<dbReference type="EMBL" id="AY259286">
    <property type="protein sequence ID" value="AAP86627.1"/>
    <property type="molecule type" value="Genomic_DNA"/>
</dbReference>
<dbReference type="EMBL" id="AL049767">
    <property type="status" value="NOT_ANNOTATED_CDS"/>
    <property type="molecule type" value="Genomic_DNA"/>
</dbReference>
<dbReference type="EMBL" id="CH471077">
    <property type="protein sequence ID" value="EAW75870.1"/>
    <property type="molecule type" value="Genomic_DNA"/>
</dbReference>
<dbReference type="CCDS" id="CCDS13346.1"/>
<dbReference type="PIR" id="A43412">
    <property type="entry name" value="A43412"/>
</dbReference>
<dbReference type="RefSeq" id="NP_002999.1">
    <property type="nucleotide sequence ID" value="NM_003008.3"/>
</dbReference>
<dbReference type="SMR" id="Q02383"/>
<dbReference type="BioGRID" id="112307">
    <property type="interactions" value="85"/>
</dbReference>
<dbReference type="FunCoup" id="Q02383">
    <property type="interactions" value="204"/>
</dbReference>
<dbReference type="IntAct" id="Q02383">
    <property type="interactions" value="57"/>
</dbReference>
<dbReference type="MINT" id="Q02383"/>
<dbReference type="STRING" id="9606.ENSP00000361855"/>
<dbReference type="DrugBank" id="DB14533">
    <property type="generic name" value="Zinc chloride"/>
</dbReference>
<dbReference type="DrugBank" id="DB14548">
    <property type="generic name" value="Zinc sulfate, unspecified form"/>
</dbReference>
<dbReference type="GlyConnect" id="2012">
    <property type="glycosylation" value="2 O-Linked glycans (1 site)"/>
</dbReference>
<dbReference type="GlyCosmos" id="Q02383">
    <property type="glycosylation" value="2 sites, 13 glycans"/>
</dbReference>
<dbReference type="GlyGen" id="Q02383">
    <property type="glycosylation" value="3 sites, 11 N-linked glycans (1 site), 3 O-linked glycans (2 sites)"/>
</dbReference>
<dbReference type="iPTMnet" id="Q02383"/>
<dbReference type="PhosphoSitePlus" id="Q02383"/>
<dbReference type="BioMuta" id="SEMG2"/>
<dbReference type="DMDM" id="401079"/>
<dbReference type="jPOST" id="Q02383"/>
<dbReference type="MassIVE" id="Q02383"/>
<dbReference type="PaxDb" id="9606-ENSP00000361855"/>
<dbReference type="PeptideAtlas" id="Q02383"/>
<dbReference type="ProteomicsDB" id="58084"/>
<dbReference type="Pumba" id="Q02383"/>
<dbReference type="Antibodypedia" id="27534">
    <property type="antibodies" value="86 antibodies from 18 providers"/>
</dbReference>
<dbReference type="DNASU" id="6407"/>
<dbReference type="Ensembl" id="ENST00000372769.4">
    <property type="protein sequence ID" value="ENSP00000361855.3"/>
    <property type="gene ID" value="ENSG00000124157.7"/>
</dbReference>
<dbReference type="GeneID" id="6407"/>
<dbReference type="KEGG" id="hsa:6407"/>
<dbReference type="MANE-Select" id="ENST00000372769.4">
    <property type="protein sequence ID" value="ENSP00000361855.3"/>
    <property type="RefSeq nucleotide sequence ID" value="NM_003008.3"/>
    <property type="RefSeq protein sequence ID" value="NP_002999.1"/>
</dbReference>
<dbReference type="UCSC" id="uc002xnk.4">
    <property type="organism name" value="human"/>
</dbReference>
<dbReference type="AGR" id="HGNC:10743"/>
<dbReference type="CTD" id="6407"/>
<dbReference type="DisGeNET" id="6407"/>
<dbReference type="GeneCards" id="SEMG2"/>
<dbReference type="HGNC" id="HGNC:10743">
    <property type="gene designation" value="SEMG2"/>
</dbReference>
<dbReference type="HPA" id="ENSG00000124157">
    <property type="expression patterns" value="Tissue enriched (seminal)"/>
</dbReference>
<dbReference type="MIM" id="182141">
    <property type="type" value="gene"/>
</dbReference>
<dbReference type="neXtProt" id="NX_Q02383"/>
<dbReference type="OpenTargets" id="ENSG00000124157"/>
<dbReference type="PharmGKB" id="PA35665"/>
<dbReference type="VEuPathDB" id="HostDB:ENSG00000124157"/>
<dbReference type="eggNOG" id="ENOG502T80H">
    <property type="taxonomic scope" value="Eukaryota"/>
</dbReference>
<dbReference type="GeneTree" id="ENSGT00940000162560"/>
<dbReference type="HOGENOM" id="CLU_034710_0_0_1"/>
<dbReference type="InParanoid" id="Q02383"/>
<dbReference type="OMA" id="HGKSQNQ"/>
<dbReference type="OrthoDB" id="9482349at2759"/>
<dbReference type="PAN-GO" id="Q02383">
    <property type="GO annotations" value="1 GO annotation based on evolutionary models"/>
</dbReference>
<dbReference type="PhylomeDB" id="Q02383"/>
<dbReference type="TreeFam" id="TF342360"/>
<dbReference type="PathwayCommons" id="Q02383"/>
<dbReference type="SignaLink" id="Q02383"/>
<dbReference type="BioGRID-ORCS" id="6407">
    <property type="hits" value="8 hits in 1104 CRISPR screens"/>
</dbReference>
<dbReference type="CD-CODE" id="D1D0EBED">
    <property type="entry name" value="Large dense-core vesicles"/>
</dbReference>
<dbReference type="ChiTaRS" id="SEMG2">
    <property type="organism name" value="human"/>
</dbReference>
<dbReference type="GeneWiki" id="SEMG2"/>
<dbReference type="GenomeRNAi" id="6407"/>
<dbReference type="Pharos" id="Q02383">
    <property type="development level" value="Tbio"/>
</dbReference>
<dbReference type="PRO" id="PR:Q02383"/>
<dbReference type="Proteomes" id="UP000005640">
    <property type="component" value="Chromosome 20"/>
</dbReference>
<dbReference type="RNAct" id="Q02383">
    <property type="molecule type" value="protein"/>
</dbReference>
<dbReference type="Bgee" id="ENSG00000124157">
    <property type="expression patterns" value="Expressed in seminal vesicle and 45 other cell types or tissues"/>
</dbReference>
<dbReference type="GO" id="GO:0070062">
    <property type="term" value="C:extracellular exosome"/>
    <property type="evidence" value="ECO:0007005"/>
    <property type="project" value="UniProtKB"/>
</dbReference>
<dbReference type="GO" id="GO:0005615">
    <property type="term" value="C:extracellular space"/>
    <property type="evidence" value="ECO:0000314"/>
    <property type="project" value="UniProtKB"/>
</dbReference>
<dbReference type="GO" id="GO:0005634">
    <property type="term" value="C:nucleus"/>
    <property type="evidence" value="ECO:0007005"/>
    <property type="project" value="UniProtKB"/>
</dbReference>
<dbReference type="GO" id="GO:0002020">
    <property type="term" value="F:protease binding"/>
    <property type="evidence" value="ECO:0000353"/>
    <property type="project" value="UniProtKB"/>
</dbReference>
<dbReference type="GO" id="GO:0008270">
    <property type="term" value="F:zinc ion binding"/>
    <property type="evidence" value="ECO:0000315"/>
    <property type="project" value="UniProtKB"/>
</dbReference>
<dbReference type="GO" id="GO:0019731">
    <property type="term" value="P:antibacterial humoral response"/>
    <property type="evidence" value="ECO:0000315"/>
    <property type="project" value="UniProtKB"/>
</dbReference>
<dbReference type="GO" id="GO:0050817">
    <property type="term" value="P:coagulation"/>
    <property type="evidence" value="ECO:0000314"/>
    <property type="project" value="UniProtKB"/>
</dbReference>
<dbReference type="GO" id="GO:1901318">
    <property type="term" value="P:negative regulation of flagellated sperm motility"/>
    <property type="evidence" value="ECO:0007669"/>
    <property type="project" value="InterPro"/>
</dbReference>
<dbReference type="GO" id="GO:1900005">
    <property type="term" value="P:positive regulation of serine-type endopeptidase activity"/>
    <property type="evidence" value="ECO:0000314"/>
    <property type="project" value="UniProtKB"/>
</dbReference>
<dbReference type="GO" id="GO:0048240">
    <property type="term" value="P:sperm capacitation"/>
    <property type="evidence" value="ECO:0000318"/>
    <property type="project" value="GO_Central"/>
</dbReference>
<dbReference type="InterPro" id="IPR008836">
    <property type="entry name" value="Semenogelin"/>
</dbReference>
<dbReference type="PANTHER" id="PTHR10547:SF6">
    <property type="entry name" value="SEMENOGELIN-2"/>
    <property type="match status" value="1"/>
</dbReference>
<dbReference type="PANTHER" id="PTHR10547">
    <property type="entry name" value="SEMENOGELIN/SEMINAL VESICLE SECRETORY PROTEIN"/>
    <property type="match status" value="1"/>
</dbReference>
<dbReference type="Pfam" id="PF05474">
    <property type="entry name" value="Semenogelin"/>
    <property type="match status" value="1"/>
</dbReference>
<gene>
    <name type="primary">SEMG2</name>
</gene>